<evidence type="ECO:0000255" key="1">
    <source>
        <dbReference type="HAMAP-Rule" id="MF_00004"/>
    </source>
</evidence>
<proteinExistence type="inferred from homology"/>
<keyword id="KW-0963">Cytoplasm</keyword>
<keyword id="KW-0328">Glycosyltransferase</keyword>
<keyword id="KW-0660">Purine salvage</keyword>
<keyword id="KW-1185">Reference proteome</keyword>
<keyword id="KW-0808">Transferase</keyword>
<gene>
    <name evidence="1" type="primary">apt</name>
    <name type="ordered locus">Acry_0401</name>
</gene>
<protein>
    <recommendedName>
        <fullName evidence="1">Adenine phosphoribosyltransferase</fullName>
        <shortName evidence="1">APRT</shortName>
        <ecNumber evidence="1">2.4.2.7</ecNumber>
    </recommendedName>
</protein>
<dbReference type="EC" id="2.4.2.7" evidence="1"/>
<dbReference type="EMBL" id="CP000697">
    <property type="protein sequence ID" value="ABQ29626.1"/>
    <property type="molecule type" value="Genomic_DNA"/>
</dbReference>
<dbReference type="RefSeq" id="WP_011941503.1">
    <property type="nucleotide sequence ID" value="NC_009484.1"/>
</dbReference>
<dbReference type="SMR" id="A5FVJ4"/>
<dbReference type="STRING" id="349163.Acry_0401"/>
<dbReference type="KEGG" id="acr:Acry_0401"/>
<dbReference type="eggNOG" id="COG0503">
    <property type="taxonomic scope" value="Bacteria"/>
</dbReference>
<dbReference type="HOGENOM" id="CLU_063339_3_0_5"/>
<dbReference type="UniPathway" id="UPA00588">
    <property type="reaction ID" value="UER00646"/>
</dbReference>
<dbReference type="Proteomes" id="UP000000245">
    <property type="component" value="Chromosome"/>
</dbReference>
<dbReference type="GO" id="GO:0005737">
    <property type="term" value="C:cytoplasm"/>
    <property type="evidence" value="ECO:0007669"/>
    <property type="project" value="UniProtKB-SubCell"/>
</dbReference>
<dbReference type="GO" id="GO:0002055">
    <property type="term" value="F:adenine binding"/>
    <property type="evidence" value="ECO:0007669"/>
    <property type="project" value="TreeGrafter"/>
</dbReference>
<dbReference type="GO" id="GO:0003999">
    <property type="term" value="F:adenine phosphoribosyltransferase activity"/>
    <property type="evidence" value="ECO:0007669"/>
    <property type="project" value="UniProtKB-UniRule"/>
</dbReference>
<dbReference type="GO" id="GO:0016208">
    <property type="term" value="F:AMP binding"/>
    <property type="evidence" value="ECO:0007669"/>
    <property type="project" value="TreeGrafter"/>
</dbReference>
<dbReference type="GO" id="GO:0006168">
    <property type="term" value="P:adenine salvage"/>
    <property type="evidence" value="ECO:0007669"/>
    <property type="project" value="InterPro"/>
</dbReference>
<dbReference type="GO" id="GO:0044209">
    <property type="term" value="P:AMP salvage"/>
    <property type="evidence" value="ECO:0007669"/>
    <property type="project" value="UniProtKB-UniRule"/>
</dbReference>
<dbReference type="GO" id="GO:0006166">
    <property type="term" value="P:purine ribonucleoside salvage"/>
    <property type="evidence" value="ECO:0007669"/>
    <property type="project" value="UniProtKB-KW"/>
</dbReference>
<dbReference type="CDD" id="cd06223">
    <property type="entry name" value="PRTases_typeI"/>
    <property type="match status" value="1"/>
</dbReference>
<dbReference type="FunFam" id="3.40.50.2020:FF:000004">
    <property type="entry name" value="Adenine phosphoribosyltransferase"/>
    <property type="match status" value="1"/>
</dbReference>
<dbReference type="Gene3D" id="3.40.50.2020">
    <property type="match status" value="1"/>
</dbReference>
<dbReference type="HAMAP" id="MF_00004">
    <property type="entry name" value="Aden_phosphoribosyltr"/>
    <property type="match status" value="1"/>
</dbReference>
<dbReference type="InterPro" id="IPR005764">
    <property type="entry name" value="Ade_phspho_trans"/>
</dbReference>
<dbReference type="InterPro" id="IPR000836">
    <property type="entry name" value="PRibTrfase_dom"/>
</dbReference>
<dbReference type="InterPro" id="IPR029057">
    <property type="entry name" value="PRTase-like"/>
</dbReference>
<dbReference type="InterPro" id="IPR050054">
    <property type="entry name" value="UPRTase/APRTase"/>
</dbReference>
<dbReference type="NCBIfam" id="TIGR01090">
    <property type="entry name" value="apt"/>
    <property type="match status" value="1"/>
</dbReference>
<dbReference type="NCBIfam" id="NF002634">
    <property type="entry name" value="PRK02304.1-3"/>
    <property type="match status" value="1"/>
</dbReference>
<dbReference type="NCBIfam" id="NF002636">
    <property type="entry name" value="PRK02304.1-5"/>
    <property type="match status" value="1"/>
</dbReference>
<dbReference type="PANTHER" id="PTHR32315">
    <property type="entry name" value="ADENINE PHOSPHORIBOSYLTRANSFERASE"/>
    <property type="match status" value="1"/>
</dbReference>
<dbReference type="PANTHER" id="PTHR32315:SF3">
    <property type="entry name" value="ADENINE PHOSPHORIBOSYLTRANSFERASE"/>
    <property type="match status" value="1"/>
</dbReference>
<dbReference type="Pfam" id="PF00156">
    <property type="entry name" value="Pribosyltran"/>
    <property type="match status" value="1"/>
</dbReference>
<dbReference type="SUPFAM" id="SSF53271">
    <property type="entry name" value="PRTase-like"/>
    <property type="match status" value="1"/>
</dbReference>
<dbReference type="PROSITE" id="PS00103">
    <property type="entry name" value="PUR_PYR_PR_TRANSFER"/>
    <property type="match status" value="1"/>
</dbReference>
<name>APT_ACICJ</name>
<sequence>MNLKDHIRGIPDFPKPGILFYDISTLIRHADAWQVAMGRLAKVVRAHHPDLLAGVESRGFILAAPLALKLGCGFIMLRKRGKLPGATVGYDYDLEYGQDRIEIQADAVQPGQRVVVVDDLLATGGTMAAGIKLLRKVGAEVPAAAALIELAFLKGRDRLDVPFEALVSYDQ</sequence>
<comment type="function">
    <text evidence="1">Catalyzes a salvage reaction resulting in the formation of AMP, that is energically less costly than de novo synthesis.</text>
</comment>
<comment type="catalytic activity">
    <reaction evidence="1">
        <text>AMP + diphosphate = 5-phospho-alpha-D-ribose 1-diphosphate + adenine</text>
        <dbReference type="Rhea" id="RHEA:16609"/>
        <dbReference type="ChEBI" id="CHEBI:16708"/>
        <dbReference type="ChEBI" id="CHEBI:33019"/>
        <dbReference type="ChEBI" id="CHEBI:58017"/>
        <dbReference type="ChEBI" id="CHEBI:456215"/>
        <dbReference type="EC" id="2.4.2.7"/>
    </reaction>
</comment>
<comment type="pathway">
    <text evidence="1">Purine metabolism; AMP biosynthesis via salvage pathway; AMP from adenine: step 1/1.</text>
</comment>
<comment type="subunit">
    <text evidence="1">Homodimer.</text>
</comment>
<comment type="subcellular location">
    <subcellularLocation>
        <location evidence="1">Cytoplasm</location>
    </subcellularLocation>
</comment>
<comment type="similarity">
    <text evidence="1">Belongs to the purine/pyrimidine phosphoribosyltransferase family.</text>
</comment>
<accession>A5FVJ4</accession>
<feature type="chain" id="PRO_1000000251" description="Adenine phosphoribosyltransferase">
    <location>
        <begin position="1"/>
        <end position="171"/>
    </location>
</feature>
<organism>
    <name type="scientific">Acidiphilium cryptum (strain JF-5)</name>
    <dbReference type="NCBI Taxonomy" id="349163"/>
    <lineage>
        <taxon>Bacteria</taxon>
        <taxon>Pseudomonadati</taxon>
        <taxon>Pseudomonadota</taxon>
        <taxon>Alphaproteobacteria</taxon>
        <taxon>Acetobacterales</taxon>
        <taxon>Acidocellaceae</taxon>
        <taxon>Acidiphilium</taxon>
    </lineage>
</organism>
<reference key="1">
    <citation type="submission" date="2007-05" db="EMBL/GenBank/DDBJ databases">
        <title>Complete sequence of chromosome of Acidiphilium cryptum JF-5.</title>
        <authorList>
            <consortium name="US DOE Joint Genome Institute"/>
            <person name="Copeland A."/>
            <person name="Lucas S."/>
            <person name="Lapidus A."/>
            <person name="Barry K."/>
            <person name="Detter J.C."/>
            <person name="Glavina del Rio T."/>
            <person name="Hammon N."/>
            <person name="Israni S."/>
            <person name="Dalin E."/>
            <person name="Tice H."/>
            <person name="Pitluck S."/>
            <person name="Sims D."/>
            <person name="Brettin T."/>
            <person name="Bruce D."/>
            <person name="Han C."/>
            <person name="Schmutz J."/>
            <person name="Larimer F."/>
            <person name="Land M."/>
            <person name="Hauser L."/>
            <person name="Kyrpides N."/>
            <person name="Kim E."/>
            <person name="Magnuson T."/>
            <person name="Richardson P."/>
        </authorList>
    </citation>
    <scope>NUCLEOTIDE SEQUENCE [LARGE SCALE GENOMIC DNA]</scope>
    <source>
        <strain>JF-5</strain>
    </source>
</reference>